<proteinExistence type="evidence at protein level"/>
<name>ATTY_CAEEL</name>
<accession>Q93703</accession>
<organism evidence="8">
    <name type="scientific">Caenorhabditis elegans</name>
    <dbReference type="NCBI Taxonomy" id="6239"/>
    <lineage>
        <taxon>Eukaryota</taxon>
        <taxon>Metazoa</taxon>
        <taxon>Ecdysozoa</taxon>
        <taxon>Nematoda</taxon>
        <taxon>Chromadorea</taxon>
        <taxon>Rhabditida</taxon>
        <taxon>Rhabditina</taxon>
        <taxon>Rhabditomorpha</taxon>
        <taxon>Rhabditoidea</taxon>
        <taxon>Rhabditidae</taxon>
        <taxon>Peloderinae</taxon>
        <taxon>Caenorhabditis</taxon>
    </lineage>
</organism>
<dbReference type="EC" id="2.6.1.5" evidence="2 6"/>
<dbReference type="EMBL" id="BX284606">
    <property type="protein sequence ID" value="CAB03090.1"/>
    <property type="molecule type" value="Genomic_DNA"/>
</dbReference>
<dbReference type="PIR" id="T22087">
    <property type="entry name" value="T22087"/>
</dbReference>
<dbReference type="RefSeq" id="NP_510454.1">
    <property type="nucleotide sequence ID" value="NM_078053.8"/>
</dbReference>
<dbReference type="SMR" id="Q93703"/>
<dbReference type="DIP" id="DIP-24643N"/>
<dbReference type="FunCoup" id="Q93703">
    <property type="interactions" value="107"/>
</dbReference>
<dbReference type="IntAct" id="Q93703">
    <property type="interactions" value="2"/>
</dbReference>
<dbReference type="STRING" id="6239.F42D1.2.1"/>
<dbReference type="PaxDb" id="6239-F42D1.2"/>
<dbReference type="PeptideAtlas" id="Q93703"/>
<dbReference type="EnsemblMetazoa" id="F42D1.2.1">
    <property type="protein sequence ID" value="F42D1.2.1"/>
    <property type="gene ID" value="WBGene00009628"/>
</dbReference>
<dbReference type="GeneID" id="181574"/>
<dbReference type="KEGG" id="cel:CELE_F42D1.2"/>
<dbReference type="UCSC" id="F42D1.2.1">
    <property type="organism name" value="c. elegans"/>
</dbReference>
<dbReference type="AGR" id="WB:WBGene00009628"/>
<dbReference type="CTD" id="181574"/>
<dbReference type="WormBase" id="F42D1.2">
    <property type="protein sequence ID" value="CE10298"/>
    <property type="gene ID" value="WBGene00009628"/>
    <property type="gene designation" value="tatn-1"/>
</dbReference>
<dbReference type="eggNOG" id="KOG0259">
    <property type="taxonomic scope" value="Eukaryota"/>
</dbReference>
<dbReference type="GeneTree" id="ENSGT00940000156704"/>
<dbReference type="HOGENOM" id="CLU_017584_4_2_1"/>
<dbReference type="InParanoid" id="Q93703"/>
<dbReference type="OMA" id="CALDLCI"/>
<dbReference type="OrthoDB" id="7042322at2759"/>
<dbReference type="PhylomeDB" id="Q93703"/>
<dbReference type="Reactome" id="R-CEL-8963684">
    <property type="pathway name" value="Tyrosine catabolism"/>
</dbReference>
<dbReference type="UniPathway" id="UPA00139">
    <property type="reaction ID" value="UER00338"/>
</dbReference>
<dbReference type="PRO" id="PR:Q93703"/>
<dbReference type="Proteomes" id="UP000001940">
    <property type="component" value="Chromosome X"/>
</dbReference>
<dbReference type="Bgee" id="WBGene00009628">
    <property type="expression patterns" value="Expressed in larva and 3 other cell types or tissues"/>
</dbReference>
<dbReference type="GO" id="GO:0004838">
    <property type="term" value="F:L-tyrosine-2-oxoglutarate transaminase activity"/>
    <property type="evidence" value="ECO:0000318"/>
    <property type="project" value="GO_Central"/>
</dbReference>
<dbReference type="GO" id="GO:0030170">
    <property type="term" value="F:pyridoxal phosphate binding"/>
    <property type="evidence" value="ECO:0007669"/>
    <property type="project" value="InterPro"/>
</dbReference>
<dbReference type="GO" id="GO:0009058">
    <property type="term" value="P:biosynthetic process"/>
    <property type="evidence" value="ECO:0007669"/>
    <property type="project" value="InterPro"/>
</dbReference>
<dbReference type="GO" id="GO:0043053">
    <property type="term" value="P:dauer entry"/>
    <property type="evidence" value="ECO:0000316"/>
    <property type="project" value="CACAO"/>
</dbReference>
<dbReference type="GO" id="GO:0006559">
    <property type="term" value="P:L-phenylalanine catabolic process"/>
    <property type="evidence" value="ECO:0000318"/>
    <property type="project" value="GO_Central"/>
</dbReference>
<dbReference type="GO" id="GO:0006572">
    <property type="term" value="P:tyrosine catabolic process"/>
    <property type="evidence" value="ECO:0000318"/>
    <property type="project" value="GO_Central"/>
</dbReference>
<dbReference type="CDD" id="cd00609">
    <property type="entry name" value="AAT_like"/>
    <property type="match status" value="1"/>
</dbReference>
<dbReference type="FunFam" id="3.40.640.10:FF:000048">
    <property type="entry name" value="tyrosine aminotransferase"/>
    <property type="match status" value="1"/>
</dbReference>
<dbReference type="Gene3D" id="3.90.1150.10">
    <property type="entry name" value="Aspartate Aminotransferase, domain 1"/>
    <property type="match status" value="1"/>
</dbReference>
<dbReference type="Gene3D" id="3.40.640.10">
    <property type="entry name" value="Type I PLP-dependent aspartate aminotransferase-like (Major domain)"/>
    <property type="match status" value="1"/>
</dbReference>
<dbReference type="InterPro" id="IPR004839">
    <property type="entry name" value="Aminotransferase_I/II_large"/>
</dbReference>
<dbReference type="InterPro" id="IPR015424">
    <property type="entry name" value="PyrdxlP-dep_Trfase"/>
</dbReference>
<dbReference type="InterPro" id="IPR015421">
    <property type="entry name" value="PyrdxlP-dep_Trfase_major"/>
</dbReference>
<dbReference type="InterPro" id="IPR015422">
    <property type="entry name" value="PyrdxlP-dep_Trfase_small"/>
</dbReference>
<dbReference type="InterPro" id="IPR005958">
    <property type="entry name" value="TyrNic_aminoTrfase"/>
</dbReference>
<dbReference type="InterPro" id="IPR005957">
    <property type="entry name" value="Tyrosine_aminoTrfase"/>
</dbReference>
<dbReference type="NCBIfam" id="TIGR01264">
    <property type="entry name" value="tyr_amTase_E"/>
    <property type="match status" value="1"/>
</dbReference>
<dbReference type="NCBIfam" id="TIGR01265">
    <property type="entry name" value="tyr_nico_aTase"/>
    <property type="match status" value="1"/>
</dbReference>
<dbReference type="PANTHER" id="PTHR45744">
    <property type="entry name" value="TYROSINE AMINOTRANSFERASE"/>
    <property type="match status" value="1"/>
</dbReference>
<dbReference type="PANTHER" id="PTHR45744:SF2">
    <property type="entry name" value="TYROSINE AMINOTRANSFERASE"/>
    <property type="match status" value="1"/>
</dbReference>
<dbReference type="Pfam" id="PF00155">
    <property type="entry name" value="Aminotran_1_2"/>
    <property type="match status" value="1"/>
</dbReference>
<dbReference type="PIRSF" id="PIRSF000517">
    <property type="entry name" value="Tyr_transaminase"/>
    <property type="match status" value="1"/>
</dbReference>
<dbReference type="PRINTS" id="PR00753">
    <property type="entry name" value="ACCSYNTHASE"/>
</dbReference>
<dbReference type="SUPFAM" id="SSF53383">
    <property type="entry name" value="PLP-dependent transferases"/>
    <property type="match status" value="1"/>
</dbReference>
<dbReference type="PROSITE" id="PS00626">
    <property type="entry name" value="RCC1_2"/>
    <property type="match status" value="1"/>
</dbReference>
<keyword id="KW-0032">Aminotransferase</keyword>
<keyword id="KW-0663">Pyridoxal phosphate</keyword>
<keyword id="KW-1185">Reference proteome</keyword>
<keyword id="KW-0808">Transferase</keyword>
<keyword id="KW-0828">Tyrosine catabolism</keyword>
<sequence length="464" mass="51031">MQTLMSHSRITPLPGAITKEEIKNQLLVHERRFLSKPNRKDQWNVLPQSAHSKNTVNPVRKIADACAVPPHPEKKVIKLHLGDPSVGGKLPPSEIAVQAMHESVSSHMFDGYGPAVGALAAREAIVERYSSADNVFTADDVVLASGCSHALQMAIEAVANAGENILVPHPGFPLYSTLCRPHNIVDKPYKIDMTGEDVRIDLSYMATIIDDNTKAIIVNNPGNPTGGVFTKEHLEEILAFAHQYKLIIIADEIYGDLVYNGATFYPLASLSPKVPIITCDGIAKRWMVPGWRLGWLIIHNHFGVLTDVKNGIVALSQKIVGPCSLVQGALPKILRETPEDYFVYTRNVIETNANIVDSILADVPGMRVVKPKGAMYMMVNISRTAYGSDVSFCQNLIREESVFCLPGQAFSAPGYFRVVLTCGSEDMEEAALRIREFCYRNFNQHSDSEDSSDEGLDLSAMESD</sequence>
<feature type="chain" id="PRO_0000453178" description="Tyrosine aminotransferase">
    <location>
        <begin position="1"/>
        <end position="464"/>
    </location>
</feature>
<feature type="modified residue" description="N6-(pyridoxal phosphate)lysine" evidence="3">
    <location>
        <position position="284"/>
    </location>
</feature>
<feature type="mutagenesis site" description="In qd182; reduces tyrosine aminotransferase activity by 90% and results in increased tyrosine levels. Delays development, increases embryonic lethality and results in germline defects in response to increased levels of meta-tyrosine, but not in response to increased levels of tyrosine (para-tyrosine). Delays the development to reproductive adults in response to oxidative stress induced by the superoxide paraquat, with only 4.9% developing into fertile adults. Increases dauer formation in an eak-4 mg348 mutant background. Reduces dauer formation in an eak-4 mg348 and aak-2 gt33 mutant background." evidence="5 6">
    <original>G</original>
    <variation>E</variation>
    <location>
        <position position="171"/>
    </location>
</feature>
<feature type="mutagenesis site" description="Increases dauer formation in an eak-4 mg348 mutant background. Suppresses fah-1 RNAi-mediated toxicity." evidence="4 5">
    <original>P</original>
    <variation>S</variation>
    <location>
        <position position="224"/>
    </location>
</feature>
<evidence type="ECO:0000250" key="1">
    <source>
        <dbReference type="UniProtKB" id="P17735"/>
    </source>
</evidence>
<evidence type="ECO:0000255" key="2">
    <source>
        <dbReference type="PIRNR" id="PIRNR000517"/>
    </source>
</evidence>
<evidence type="ECO:0000255" key="3">
    <source>
        <dbReference type="PIRSR" id="PIRSR000517-1"/>
    </source>
</evidence>
<evidence type="ECO:0000269" key="4">
    <source>
    </source>
</evidence>
<evidence type="ECO:0000269" key="5">
    <source>
    </source>
</evidence>
<evidence type="ECO:0000269" key="6">
    <source>
    </source>
</evidence>
<evidence type="ECO:0000305" key="7"/>
<evidence type="ECO:0000312" key="8">
    <source>
        <dbReference type="Proteomes" id="UP000001940"/>
    </source>
</evidence>
<evidence type="ECO:0000312" key="9">
    <source>
        <dbReference type="WormBase" id="F42D1.2"/>
    </source>
</evidence>
<protein>
    <recommendedName>
        <fullName evidence="2">Tyrosine aminotransferase</fullName>
        <shortName evidence="2">TAT</shortName>
        <ecNumber evidence="2 6">2.6.1.5</ecNumber>
    </recommendedName>
    <alternativeName>
        <fullName evidence="1">L-tyrosine:2-oxoglutarate aminotransferase</fullName>
    </alternativeName>
</protein>
<gene>
    <name evidence="9" type="primary">tatn-1</name>
    <name evidence="9" type="ORF">F42D1.2</name>
</gene>
<comment type="function">
    <text evidence="5 6">Transaminase involved in tyrosine breakdown (PubMed:24385923, PubMed:31043480). Converts tyrosine to p-hydroxyphenylpyruvate (PubMed:31043480). Has no transaminase activity towards phenylalanine (PubMed:31043480). Plays protective role against oxidative stress, metabolizing meta-tyrosine and negatively regulating its accumulation (PubMed:31043480). Plays a role in modulating the daf-2/insulin receptor-like transduction pathway through regulating tyrosine levels (PubMed:24385923). Negatively regulates dauer formation (PubMed:24385923). Plays a role in longevity (PubMed:24385923, PubMed:31043480).</text>
</comment>
<comment type="catalytic activity">
    <reaction evidence="2 6">
        <text>L-tyrosine + 2-oxoglutarate = 3-(4-hydroxyphenyl)pyruvate + L-glutamate</text>
        <dbReference type="Rhea" id="RHEA:15093"/>
        <dbReference type="ChEBI" id="CHEBI:16810"/>
        <dbReference type="ChEBI" id="CHEBI:29985"/>
        <dbReference type="ChEBI" id="CHEBI:36242"/>
        <dbReference type="ChEBI" id="CHEBI:58315"/>
        <dbReference type="EC" id="2.6.1.5"/>
    </reaction>
</comment>
<comment type="catalytic activity">
    <reaction evidence="6">
        <text>3-hydroxy-L-phenylalanine + 2-oxoglutarate = 3-(3-hydroxyphenyl)pyruvate + L-glutamate</text>
        <dbReference type="Rhea" id="RHEA:67168"/>
        <dbReference type="ChEBI" id="CHEBI:16810"/>
        <dbReference type="ChEBI" id="CHEBI:29985"/>
        <dbReference type="ChEBI" id="CHEBI:78290"/>
        <dbReference type="ChEBI" id="CHEBI:167869"/>
    </reaction>
</comment>
<comment type="cofactor">
    <cofactor evidence="2 3">
        <name>pyridoxal 5'-phosphate</name>
        <dbReference type="ChEBI" id="CHEBI:597326"/>
    </cofactor>
</comment>
<comment type="biophysicochemical properties">
    <kinetics>
        <KM evidence="6">1.23 mM for tyrosine (para-tyrosine)</KM>
        <KM evidence="6">7.57 mM for meta-tyrosine</KM>
        <text evidence="6">kcat is 2852 sec(-1) with tyrosine (para-tyrosine) as substrate (PubMed:31043480). kcat is 2520 sec(-1) with meta-tyrosine as substrate (PubMed:31043480).</text>
    </kinetics>
</comment>
<comment type="pathway">
    <text evidence="2">Amino-acid degradation; L-phenylalanine degradation; acetoacetate and fumarate from L-phenylalanine: step 2/6.</text>
</comment>
<comment type="subunit">
    <text evidence="2">Homodimer.</text>
</comment>
<comment type="tissue specificity">
    <text evidence="4 5">Expressed in the muscle (PubMed:18227072). Expressed in the hypodermis and intestine (PubMed:18227072, PubMed:24385923).</text>
</comment>
<comment type="induction">
    <text evidence="6">Up-regulated in response to oxidative stress.</text>
</comment>
<comment type="disruption phenotype">
    <text evidence="4 5 6">RNAi-mediated knockdown increases lifespan by 17.8%, and reduces tyrosine aminotransferase activity by 75% thus increasing tyrosine levels (PubMed:24385923, PubMed:31043480). RNAi-mediated knockdown delays reproductive adult development in response to oxidative stress induced by the superoxide paraquat (PubMed:31043480). RNAi-mediated knockdown increases dauer formation in eak-4 mg348, eak-3 mg344, eak-5 mg337, eak-2 mg433, or eak-7 tm3188 mutant backgrounds at 25 degrees Celsius (PubMed:24385923). RNAi-mediated knockdown increases aak-2 phosphorylation, but does not impair energy production in a eak-4 mg348 mutant background (PubMed:24385923). RNAi-mediated knockdown results in a reduced lifespan in an aak-2 gt33 mutant background (PubMed:24385923). RNAi-mediated knockdown results in reduced dauer formation in an eak-4 mg348 and aak-2 gt33 mutant background (PubMed:24385923). RNAi-mediated knockdown extends the lifespan of eak-7 tm3188 mutants (PubMed:24385923). RNAi-mediated knockdown together with fah-1 RNAi rescues the impaired growth and fertility defects in the single fah-1 RNAi mutant (PubMed:18227072).</text>
</comment>
<comment type="similarity">
    <text evidence="2">Belongs to the class-I pyridoxal-phosphate-dependent aminotransferase family.</text>
</comment>
<reference evidence="8" key="1">
    <citation type="journal article" date="1998" name="Science">
        <title>Genome sequence of the nematode C. elegans: a platform for investigating biology.</title>
        <authorList>
            <consortium name="The C. elegans sequencing consortium"/>
        </authorList>
    </citation>
    <scope>NUCLEOTIDE SEQUENCE [LARGE SCALE GENOMIC DNA]</scope>
    <source>
        <strain evidence="8">Bristol N2</strain>
    </source>
</reference>
<reference evidence="7" key="2">
    <citation type="journal article" date="2008" name="J. Biol. Chem.">
        <title>The Caenorhabditis elegans K10C2.4 gene encodes a member of the fumarylacetoacetate hydrolase family: a Caenorhabditis elegans model of type I tyrosinemia.</title>
        <authorList>
            <person name="Fisher A.L."/>
            <person name="Page K.E."/>
            <person name="Lithgow G.J."/>
            <person name="Nash L."/>
        </authorList>
    </citation>
    <scope>TISSUE SPECIFICITY</scope>
    <scope>DISRUPTION PHENOTYPE</scope>
    <scope>MUTAGENESIS OF PRO-224</scope>
</reference>
<reference evidence="7" key="3">
    <citation type="journal article" date="2013" name="PLoS Genet.">
        <title>TATN-1 mutations reveal a novel role for tyrosine as a metabolic signal that influences developmental decisions and longevity in Caenorhabditis elegans.</title>
        <authorList>
            <person name="Ferguson A.A."/>
            <person name="Roy S."/>
            <person name="Kormanik K.N."/>
            <person name="Kim Y."/>
            <person name="Dumas K.J."/>
            <person name="Ritov V.B."/>
            <person name="Matern D."/>
            <person name="Hu P.J."/>
            <person name="Fisher A.L."/>
        </authorList>
    </citation>
    <scope>FUNCTION</scope>
    <scope>TISSUE SPECIFICITY</scope>
    <scope>DISRUPTION PHENOTYPE</scope>
    <scope>MUTAGENESIS OF GLY-171 AND PRO-224</scope>
</reference>
<reference evidence="7" key="4">
    <citation type="journal article" date="2019" name="J. Biol. Chem.">
        <title>Tyrosine aminotransferase is involved in the oxidative stress response by metabolizing meta-tyrosine in Caenorhabditis elegans.</title>
        <authorList>
            <person name="Ipson B.R."/>
            <person name="Green R.A."/>
            <person name="Wilson J.T."/>
            <person name="Watson J.N."/>
            <person name="Faull K.F."/>
            <person name="Fisher A.L."/>
        </authorList>
    </citation>
    <scope>FUNCTION</scope>
    <scope>CATALYTIC ACTIVITY</scope>
    <scope>BIOPHYSICOCHEMICAL PROPERTIES</scope>
    <scope>DISRUPTION PHENOTYPE</scope>
    <scope>MUTAGENESIS OF GLY-171</scope>
</reference>